<sequence>MEQFLKIGLIINTHGLKGELKVNPQTDNIDRFKKLKRVYIAGEEKQVEGCKFLNDKVVLKIQGIDGIEIANKYRNKYIEVKREDAVELPEGRYYVADIIGCKVLDEDGNYLGKVKEVIHTKNNDVYWVEGKKELLIPVLKTIVVKIDIENEEIIIKPVKTWLLE</sequence>
<reference key="1">
    <citation type="journal article" date="2003" name="Proc. Natl. Acad. Sci. U.S.A.">
        <title>The genome sequence of Clostridium tetani, the causative agent of tetanus disease.</title>
        <authorList>
            <person name="Brueggemann H."/>
            <person name="Baeumer S."/>
            <person name="Fricke W.F."/>
            <person name="Wiezer A."/>
            <person name="Liesegang H."/>
            <person name="Decker I."/>
            <person name="Herzberg C."/>
            <person name="Martinez-Arias R."/>
            <person name="Merkl R."/>
            <person name="Henne A."/>
            <person name="Gottschalk G."/>
        </authorList>
    </citation>
    <scope>NUCLEOTIDE SEQUENCE [LARGE SCALE GENOMIC DNA]</scope>
    <source>
        <strain>Massachusetts / E88</strain>
    </source>
</reference>
<accession>Q895M3</accession>
<keyword id="KW-0143">Chaperone</keyword>
<keyword id="KW-0963">Cytoplasm</keyword>
<keyword id="KW-1185">Reference proteome</keyword>
<keyword id="KW-0690">Ribosome biogenesis</keyword>
<keyword id="KW-0698">rRNA processing</keyword>
<feature type="chain" id="PRO_0000163279" description="Ribosome maturation factor RimM">
    <location>
        <begin position="1"/>
        <end position="164"/>
    </location>
</feature>
<feature type="domain" description="PRC barrel" evidence="1">
    <location>
        <begin position="90"/>
        <end position="161"/>
    </location>
</feature>
<dbReference type="EMBL" id="AE015927">
    <property type="protein sequence ID" value="AAO35817.1"/>
    <property type="status" value="ALT_INIT"/>
    <property type="molecule type" value="Genomic_DNA"/>
</dbReference>
<dbReference type="RefSeq" id="WP_035124887.1">
    <property type="nucleotide sequence ID" value="NC_004557.1"/>
</dbReference>
<dbReference type="SMR" id="Q895M3"/>
<dbReference type="STRING" id="212717.CTC_01250"/>
<dbReference type="GeneID" id="24253242"/>
<dbReference type="KEGG" id="ctc:CTC_01250"/>
<dbReference type="HOGENOM" id="CLU_077636_3_2_9"/>
<dbReference type="OrthoDB" id="9810331at2"/>
<dbReference type="Proteomes" id="UP000001412">
    <property type="component" value="Chromosome"/>
</dbReference>
<dbReference type="GO" id="GO:0005737">
    <property type="term" value="C:cytoplasm"/>
    <property type="evidence" value="ECO:0007669"/>
    <property type="project" value="UniProtKB-SubCell"/>
</dbReference>
<dbReference type="GO" id="GO:0005840">
    <property type="term" value="C:ribosome"/>
    <property type="evidence" value="ECO:0007669"/>
    <property type="project" value="InterPro"/>
</dbReference>
<dbReference type="GO" id="GO:0043022">
    <property type="term" value="F:ribosome binding"/>
    <property type="evidence" value="ECO:0007669"/>
    <property type="project" value="InterPro"/>
</dbReference>
<dbReference type="GO" id="GO:0042274">
    <property type="term" value="P:ribosomal small subunit biogenesis"/>
    <property type="evidence" value="ECO:0007669"/>
    <property type="project" value="UniProtKB-UniRule"/>
</dbReference>
<dbReference type="GO" id="GO:0006364">
    <property type="term" value="P:rRNA processing"/>
    <property type="evidence" value="ECO:0007669"/>
    <property type="project" value="UniProtKB-UniRule"/>
</dbReference>
<dbReference type="Gene3D" id="2.30.30.240">
    <property type="entry name" value="PRC-barrel domain"/>
    <property type="match status" value="1"/>
</dbReference>
<dbReference type="Gene3D" id="2.40.30.60">
    <property type="entry name" value="RimM"/>
    <property type="match status" value="1"/>
</dbReference>
<dbReference type="HAMAP" id="MF_00014">
    <property type="entry name" value="Ribosome_mat_RimM"/>
    <property type="match status" value="1"/>
</dbReference>
<dbReference type="InterPro" id="IPR027275">
    <property type="entry name" value="PRC-brl_dom"/>
</dbReference>
<dbReference type="InterPro" id="IPR011033">
    <property type="entry name" value="PRC_barrel-like_sf"/>
</dbReference>
<dbReference type="InterPro" id="IPR011961">
    <property type="entry name" value="RimM"/>
</dbReference>
<dbReference type="InterPro" id="IPR002676">
    <property type="entry name" value="RimM_N"/>
</dbReference>
<dbReference type="InterPro" id="IPR036976">
    <property type="entry name" value="RimM_N_sf"/>
</dbReference>
<dbReference type="InterPro" id="IPR009000">
    <property type="entry name" value="Transl_B-barrel_sf"/>
</dbReference>
<dbReference type="NCBIfam" id="TIGR02273">
    <property type="entry name" value="16S_RimM"/>
    <property type="match status" value="1"/>
</dbReference>
<dbReference type="PANTHER" id="PTHR33692">
    <property type="entry name" value="RIBOSOME MATURATION FACTOR RIMM"/>
    <property type="match status" value="1"/>
</dbReference>
<dbReference type="PANTHER" id="PTHR33692:SF1">
    <property type="entry name" value="RIBOSOME MATURATION FACTOR RIMM"/>
    <property type="match status" value="1"/>
</dbReference>
<dbReference type="Pfam" id="PF05239">
    <property type="entry name" value="PRC"/>
    <property type="match status" value="1"/>
</dbReference>
<dbReference type="Pfam" id="PF01782">
    <property type="entry name" value="RimM"/>
    <property type="match status" value="1"/>
</dbReference>
<dbReference type="SUPFAM" id="SSF50346">
    <property type="entry name" value="PRC-barrel domain"/>
    <property type="match status" value="1"/>
</dbReference>
<dbReference type="SUPFAM" id="SSF50447">
    <property type="entry name" value="Translation proteins"/>
    <property type="match status" value="1"/>
</dbReference>
<protein>
    <recommendedName>
        <fullName evidence="1">Ribosome maturation factor RimM</fullName>
    </recommendedName>
</protein>
<gene>
    <name evidence="1" type="primary">rimM</name>
    <name type="ordered locus">CTC_01250</name>
</gene>
<evidence type="ECO:0000255" key="1">
    <source>
        <dbReference type="HAMAP-Rule" id="MF_00014"/>
    </source>
</evidence>
<evidence type="ECO:0000305" key="2"/>
<proteinExistence type="inferred from homology"/>
<organism>
    <name type="scientific">Clostridium tetani (strain Massachusetts / E88)</name>
    <dbReference type="NCBI Taxonomy" id="212717"/>
    <lineage>
        <taxon>Bacteria</taxon>
        <taxon>Bacillati</taxon>
        <taxon>Bacillota</taxon>
        <taxon>Clostridia</taxon>
        <taxon>Eubacteriales</taxon>
        <taxon>Clostridiaceae</taxon>
        <taxon>Clostridium</taxon>
    </lineage>
</organism>
<comment type="function">
    <text evidence="1">An accessory protein needed during the final step in the assembly of 30S ribosomal subunit, possibly for assembly of the head region. Essential for efficient processing of 16S rRNA. May be needed both before and after RbfA during the maturation of 16S rRNA. It has affinity for free ribosomal 30S subunits but not for 70S ribosomes.</text>
</comment>
<comment type="subunit">
    <text evidence="1">Binds ribosomal protein uS19.</text>
</comment>
<comment type="subcellular location">
    <subcellularLocation>
        <location evidence="1">Cytoplasm</location>
    </subcellularLocation>
</comment>
<comment type="domain">
    <text evidence="1">The PRC barrel domain binds ribosomal protein uS19.</text>
</comment>
<comment type="similarity">
    <text evidence="1">Belongs to the RimM family.</text>
</comment>
<comment type="sequence caution" evidence="2">
    <conflict type="erroneous initiation">
        <sequence resource="EMBL-CDS" id="AAO35817"/>
    </conflict>
</comment>
<name>RIMM_CLOTE</name>